<feature type="chain" id="PRO_0000253259" description="Uncharacterized protein R97">
    <location>
        <begin position="1"/>
        <end position="279"/>
    </location>
</feature>
<reference key="1">
    <citation type="journal article" date="2004" name="Science">
        <title>The 1.2-megabase genome sequence of Mimivirus.</title>
        <authorList>
            <person name="Raoult D."/>
            <person name="Audic S."/>
            <person name="Robert C."/>
            <person name="Abergel C."/>
            <person name="Renesto P."/>
            <person name="Ogata H."/>
            <person name="La Scola B."/>
            <person name="Susan M."/>
            <person name="Claverie J.-M."/>
        </authorList>
    </citation>
    <scope>NUCLEOTIDE SEQUENCE [LARGE SCALE GENOMIC DNA]</scope>
    <source>
        <strain>Rowbotham-Bradford</strain>
    </source>
</reference>
<proteinExistence type="predicted"/>
<dbReference type="EMBL" id="AY653733">
    <property type="protein sequence ID" value="AAV50372.1"/>
    <property type="molecule type" value="Genomic_DNA"/>
</dbReference>
<dbReference type="KEGG" id="vg:9924694"/>
<dbReference type="OrthoDB" id="5066at10239"/>
<dbReference type="Proteomes" id="UP000001134">
    <property type="component" value="Genome"/>
</dbReference>
<organism>
    <name type="scientific">Acanthamoeba polyphaga mimivirus</name>
    <name type="common">APMV</name>
    <dbReference type="NCBI Taxonomy" id="212035"/>
    <lineage>
        <taxon>Viruses</taxon>
        <taxon>Varidnaviria</taxon>
        <taxon>Bamfordvirae</taxon>
        <taxon>Nucleocytoviricota</taxon>
        <taxon>Megaviricetes</taxon>
        <taxon>Imitervirales</taxon>
        <taxon>Mimiviridae</taxon>
        <taxon>Megamimivirinae</taxon>
        <taxon>Mimivirus</taxon>
        <taxon>Mimivirus bradfordmassiliense</taxon>
    </lineage>
</organism>
<protein>
    <recommendedName>
        <fullName>Uncharacterized protein R97</fullName>
    </recommendedName>
</protein>
<organismHost>
    <name type="scientific">Acanthamoeba polyphaga</name>
    <name type="common">Amoeba</name>
    <dbReference type="NCBI Taxonomy" id="5757"/>
</organismHost>
<accession>Q5UPH3</accession>
<sequence length="279" mass="32656">MDKYIRSRDKSNFEKFCRRAREIHGDKYSYDVSCYVNKITTTNIKCNSCGEIFTVTPRRHLSINGGCSNCTSRGGQEYLNKFIRKLTDIHGNKYDYSMIVYKNSKTPIKLKCNQCDIIFEQIPLKLIRSKYHCPVCDFRPDCRIFNYNPKSKISVDEFIKRAKNKHGDDSYDYSEINYVDLNTKVSIRCNKCSVQFEQKPRVHLEHGHGCGTFSRYTNNEWIIFAKITHGDTYDYSRVEFISSSKPVTIGCKIHGWFVQRPTNHIISKIPCKKCRVKNQ</sequence>
<keyword id="KW-1185">Reference proteome</keyword>
<gene>
    <name type="ordered locus">MIMI_R97</name>
</gene>
<name>YR097_MIMIV</name>